<dbReference type="EMBL" id="U62296">
    <property type="protein sequence ID" value="AAC50816.1"/>
    <property type="molecule type" value="mRNA"/>
</dbReference>
<dbReference type="EMBL" id="U78774">
    <property type="protein sequence ID" value="AAC51669.1"/>
    <property type="molecule type" value="mRNA"/>
</dbReference>
<dbReference type="EMBL" id="Z74792">
    <property type="protein sequence ID" value="CAA99055.1"/>
    <property type="molecule type" value="mRNA"/>
</dbReference>
<dbReference type="EMBL" id="D85425">
    <property type="protein sequence ID" value="BAA12818.1"/>
    <property type="molecule type" value="mRNA"/>
</dbReference>
<dbReference type="EMBL" id="D89986">
    <property type="protein sequence ID" value="BAA14051.1"/>
    <property type="molecule type" value="mRNA"/>
</dbReference>
<dbReference type="EMBL" id="AF191744">
    <property type="protein sequence ID" value="AAG28389.1"/>
    <property type="molecule type" value="mRNA"/>
</dbReference>
<dbReference type="EMBL" id="AK000346">
    <property type="protein sequence ID" value="BAA91100.1"/>
    <property type="molecule type" value="mRNA"/>
</dbReference>
<dbReference type="EMBL" id="AK127677">
    <property type="protein sequence ID" value="BAG54549.1"/>
    <property type="molecule type" value="mRNA"/>
</dbReference>
<dbReference type="EMBL" id="AK300774">
    <property type="protein sequence ID" value="BAG62438.1"/>
    <property type="molecule type" value="mRNA"/>
</dbReference>
<dbReference type="EMBL" id="AK301385">
    <property type="protein sequence ID" value="BAG62925.1"/>
    <property type="molecule type" value="mRNA"/>
</dbReference>
<dbReference type="EMBL" id="BT020081">
    <property type="protein sequence ID" value="AAV38884.1"/>
    <property type="molecule type" value="mRNA"/>
</dbReference>
<dbReference type="EMBL" id="AB208975">
    <property type="protein sequence ID" value="BAD92212.1"/>
    <property type="status" value="ALT_INIT"/>
    <property type="molecule type" value="mRNA"/>
</dbReference>
<dbReference type="EMBL" id="AL031289">
    <property type="status" value="NOT_ANNOTATED_CDS"/>
    <property type="molecule type" value="Genomic_DNA"/>
</dbReference>
<dbReference type="EMBL" id="AC119677">
    <property type="status" value="NOT_ANNOTATED_CDS"/>
    <property type="molecule type" value="Genomic_DNA"/>
</dbReference>
<dbReference type="EMBL" id="AL354914">
    <property type="status" value="NOT_ANNOTATED_CDS"/>
    <property type="molecule type" value="Genomic_DNA"/>
</dbReference>
<dbReference type="EMBL" id="CH471059">
    <property type="protein sequence ID" value="EAX07198.1"/>
    <property type="molecule type" value="Genomic_DNA"/>
</dbReference>
<dbReference type="EMBL" id="CH471059">
    <property type="protein sequence ID" value="EAX07201.1"/>
    <property type="molecule type" value="Genomic_DNA"/>
</dbReference>
<dbReference type="EMBL" id="CH471059">
    <property type="protein sequence ID" value="EAX07202.1"/>
    <property type="molecule type" value="Genomic_DNA"/>
</dbReference>
<dbReference type="EMBL" id="CH471059">
    <property type="protein sequence ID" value="EAX07203.1"/>
    <property type="molecule type" value="Genomic_DNA"/>
</dbReference>
<dbReference type="EMBL" id="BC005003">
    <property type="protein sequence ID" value="AAH05003.1"/>
    <property type="molecule type" value="mRNA"/>
</dbReference>
<dbReference type="CCDS" id="CCDS44120.1">
    <molecule id="Q13952-5"/>
</dbReference>
<dbReference type="CCDS" id="CCDS44121.1">
    <molecule id="Q13952-7"/>
</dbReference>
<dbReference type="CCDS" id="CCDS44122.1">
    <molecule id="Q13952-6"/>
</dbReference>
<dbReference type="CCDS" id="CCDS44123.1">
    <molecule id="Q13952-4"/>
</dbReference>
<dbReference type="CCDS" id="CCDS455.1">
    <molecule id="Q13952-2"/>
</dbReference>
<dbReference type="CCDS" id="CCDS81305.1">
    <molecule id="Q13952-1"/>
</dbReference>
<dbReference type="CCDS" id="CCDS81306.1">
    <molecule id="Q13952-3"/>
</dbReference>
<dbReference type="RefSeq" id="NP_001136059.1">
    <molecule id="Q13952-7"/>
    <property type="nucleotide sequence ID" value="NM_001142587.2"/>
</dbReference>
<dbReference type="RefSeq" id="NP_001136060.1">
    <molecule id="Q13952-5"/>
    <property type="nucleotide sequence ID" value="NM_001142588.2"/>
</dbReference>
<dbReference type="RefSeq" id="NP_001136061.1">
    <molecule id="Q13952-4"/>
    <property type="nucleotide sequence ID" value="NM_001142589.2"/>
</dbReference>
<dbReference type="RefSeq" id="NP_001136062.1">
    <molecule id="Q13952-6"/>
    <property type="nucleotide sequence ID" value="NM_001142590.2"/>
</dbReference>
<dbReference type="RefSeq" id="NP_001295043.1">
    <molecule id="Q13952-1"/>
    <property type="nucleotide sequence ID" value="NM_001308114.1"/>
</dbReference>
<dbReference type="RefSeq" id="NP_001295044.1">
    <molecule id="Q13952-3"/>
    <property type="nucleotide sequence ID" value="NM_001308115.2"/>
</dbReference>
<dbReference type="RefSeq" id="NP_055038.2">
    <molecule id="Q13952-2"/>
    <property type="nucleotide sequence ID" value="NM_014223.4"/>
</dbReference>
<dbReference type="RefSeq" id="XP_005270951.1">
    <property type="nucleotide sequence ID" value="XM_005270894.1"/>
</dbReference>
<dbReference type="RefSeq" id="XP_005270952.3">
    <property type="nucleotide sequence ID" value="XM_005270895.3"/>
</dbReference>
<dbReference type="RefSeq" id="XP_006710721.2">
    <property type="nucleotide sequence ID" value="XM_006710658.2"/>
</dbReference>
<dbReference type="RefSeq" id="XP_006710723.2">
    <molecule id="Q13952-5"/>
    <property type="nucleotide sequence ID" value="XM_006710660.4"/>
</dbReference>
<dbReference type="RefSeq" id="XP_006710724.1">
    <molecule id="Q13952-3"/>
    <property type="nucleotide sequence ID" value="XM_006710661.3"/>
</dbReference>
<dbReference type="RefSeq" id="XP_006710725.2">
    <property type="nucleotide sequence ID" value="XM_006710662.2"/>
</dbReference>
<dbReference type="RefSeq" id="XP_011539818.1">
    <property type="nucleotide sequence ID" value="XM_011541516.1"/>
</dbReference>
<dbReference type="RefSeq" id="XP_016856854.1">
    <molecule id="Q13952-1"/>
    <property type="nucleotide sequence ID" value="XM_017001365.3"/>
</dbReference>
<dbReference type="RefSeq" id="XP_016856856.1">
    <property type="nucleotide sequence ID" value="XM_017001367.1"/>
</dbReference>
<dbReference type="RefSeq" id="XP_016856857.1">
    <property type="nucleotide sequence ID" value="XM_017001368.1"/>
</dbReference>
<dbReference type="RefSeq" id="XP_016856858.1">
    <molecule id="Q13952-2"/>
    <property type="nucleotide sequence ID" value="XM_017001369.2"/>
</dbReference>
<dbReference type="RefSeq" id="XP_024303125.1">
    <molecule id="Q13952-2"/>
    <property type="nucleotide sequence ID" value="XM_024447357.1"/>
</dbReference>
<dbReference type="RefSeq" id="XP_047277293.1">
    <molecule id="Q13952-3"/>
    <property type="nucleotide sequence ID" value="XM_047421337.1"/>
</dbReference>
<dbReference type="RefSeq" id="XP_047277307.1">
    <molecule id="Q13952-3"/>
    <property type="nucleotide sequence ID" value="XM_047421351.1"/>
</dbReference>
<dbReference type="RefSeq" id="XP_047277324.1">
    <molecule id="Q13952-1"/>
    <property type="nucleotide sequence ID" value="XM_047421368.1"/>
</dbReference>
<dbReference type="RefSeq" id="XP_047277329.1">
    <molecule id="Q13952-1"/>
    <property type="nucleotide sequence ID" value="XM_047421373.1"/>
</dbReference>
<dbReference type="RefSeq" id="XP_047277332.1">
    <molecule id="Q13952-1"/>
    <property type="nucleotide sequence ID" value="XM_047421376.1"/>
</dbReference>
<dbReference type="RefSeq" id="XP_047277340.1">
    <molecule id="Q13952-2"/>
    <property type="nucleotide sequence ID" value="XM_047421384.1"/>
</dbReference>
<dbReference type="RefSeq" id="XP_054192737.1">
    <molecule id="Q13952-3"/>
    <property type="nucleotide sequence ID" value="XM_054336762.1"/>
</dbReference>
<dbReference type="RefSeq" id="XP_054192741.1">
    <molecule id="Q13952-3"/>
    <property type="nucleotide sequence ID" value="XM_054336766.1"/>
</dbReference>
<dbReference type="RefSeq" id="XP_054192749.1">
    <molecule id="Q13952-1"/>
    <property type="nucleotide sequence ID" value="XM_054336774.1"/>
</dbReference>
<dbReference type="RefSeq" id="XP_054192750.1">
    <molecule id="Q13952-1"/>
    <property type="nucleotide sequence ID" value="XM_054336775.1"/>
</dbReference>
<dbReference type="RefSeq" id="XP_054192751.1">
    <molecule id="Q13952-1"/>
    <property type="nucleotide sequence ID" value="XM_054336776.1"/>
</dbReference>
<dbReference type="RefSeq" id="XP_054192752.1">
    <molecule id="Q13952-5"/>
    <property type="nucleotide sequence ID" value="XM_054336777.1"/>
</dbReference>
<dbReference type="RefSeq" id="XP_054192753.1">
    <molecule id="Q13952-3"/>
    <property type="nucleotide sequence ID" value="XM_054336778.1"/>
</dbReference>
<dbReference type="RefSeq" id="XP_054192754.1">
    <molecule id="Q13952-2"/>
    <property type="nucleotide sequence ID" value="XM_054336779.1"/>
</dbReference>
<dbReference type="RefSeq" id="XP_054192756.1">
    <molecule id="Q13952-2"/>
    <property type="nucleotide sequence ID" value="XM_054336781.1"/>
</dbReference>
<dbReference type="RefSeq" id="XP_054192763.1">
    <molecule id="Q13952-2"/>
    <property type="nucleotide sequence ID" value="XM_054336788.1"/>
</dbReference>
<dbReference type="PDB" id="1N1J">
    <property type="method" value="X-ray"/>
    <property type="resolution" value="1.67 A"/>
    <property type="chains" value="B=27-120"/>
</dbReference>
<dbReference type="PDB" id="4AWL">
    <property type="method" value="X-ray"/>
    <property type="resolution" value="3.08 A"/>
    <property type="chains" value="C=27-120"/>
</dbReference>
<dbReference type="PDB" id="4CSR">
    <property type="method" value="X-ray"/>
    <property type="resolution" value="1.50 A"/>
    <property type="chains" value="B=27-120"/>
</dbReference>
<dbReference type="PDB" id="6QMP">
    <property type="method" value="X-ray"/>
    <property type="resolution" value="2.00 A"/>
    <property type="chains" value="C=27-120"/>
</dbReference>
<dbReference type="PDB" id="6QMQ">
    <property type="method" value="X-ray"/>
    <property type="resolution" value="2.50 A"/>
    <property type="chains" value="C=27-120"/>
</dbReference>
<dbReference type="PDB" id="6QMS">
    <property type="method" value="X-ray"/>
    <property type="resolution" value="1.80 A"/>
    <property type="chains" value="C=27-120"/>
</dbReference>
<dbReference type="PDB" id="7AH8">
    <property type="method" value="X-ray"/>
    <property type="resolution" value="2.70 A"/>
    <property type="chains" value="B/D=41-120"/>
</dbReference>
<dbReference type="PDB" id="8QU2">
    <property type="method" value="X-ray"/>
    <property type="resolution" value="1.45 A"/>
    <property type="chains" value="C=27-120"/>
</dbReference>
<dbReference type="PDB" id="8QU3">
    <property type="method" value="X-ray"/>
    <property type="resolution" value="1.41 A"/>
    <property type="chains" value="C=27-120"/>
</dbReference>
<dbReference type="PDB" id="8QU4">
    <property type="method" value="X-ray"/>
    <property type="resolution" value="1.38 A"/>
    <property type="chains" value="C=27-120"/>
</dbReference>
<dbReference type="PDBsum" id="1N1J"/>
<dbReference type="PDBsum" id="4AWL"/>
<dbReference type="PDBsum" id="4CSR"/>
<dbReference type="PDBsum" id="6QMP"/>
<dbReference type="PDBsum" id="6QMQ"/>
<dbReference type="PDBsum" id="6QMS"/>
<dbReference type="PDBsum" id="7AH8"/>
<dbReference type="PDBsum" id="8QU2"/>
<dbReference type="PDBsum" id="8QU3"/>
<dbReference type="PDBsum" id="8QU4"/>
<dbReference type="SASBDB" id="Q13952"/>
<dbReference type="SMR" id="Q13952"/>
<dbReference type="BioGRID" id="110868">
    <property type="interactions" value="186"/>
</dbReference>
<dbReference type="ComplexPortal" id="CPX-1956">
    <property type="entry name" value="CCAAT-binding factor complex"/>
</dbReference>
<dbReference type="CORUM" id="Q13952"/>
<dbReference type="FunCoup" id="Q13952">
    <property type="interactions" value="3710"/>
</dbReference>
<dbReference type="IntAct" id="Q13952">
    <property type="interactions" value="117"/>
</dbReference>
<dbReference type="MINT" id="Q13952"/>
<dbReference type="STRING" id="9606.ENSP00000312617"/>
<dbReference type="GlyCosmos" id="Q13952">
    <property type="glycosylation" value="5 sites, 2 glycans"/>
</dbReference>
<dbReference type="GlyGen" id="Q13952">
    <property type="glycosylation" value="7 sites, 2 O-linked glycans (6 sites)"/>
</dbReference>
<dbReference type="iPTMnet" id="Q13952"/>
<dbReference type="MetOSite" id="Q13952"/>
<dbReference type="PhosphoSitePlus" id="Q13952"/>
<dbReference type="BioMuta" id="NFYC"/>
<dbReference type="DMDM" id="20137773"/>
<dbReference type="jPOST" id="Q13952"/>
<dbReference type="MassIVE" id="Q13952"/>
<dbReference type="PeptideAtlas" id="Q13952"/>
<dbReference type="ProteomicsDB" id="28993"/>
<dbReference type="ProteomicsDB" id="59772">
    <molecule id="Q13952-1"/>
</dbReference>
<dbReference type="ProteomicsDB" id="59773">
    <molecule id="Q13952-2"/>
</dbReference>
<dbReference type="ProteomicsDB" id="59774">
    <molecule id="Q13952-3"/>
</dbReference>
<dbReference type="ProteomicsDB" id="59775">
    <molecule id="Q13952-4"/>
</dbReference>
<dbReference type="ProteomicsDB" id="59776">
    <molecule id="Q13952-5"/>
</dbReference>
<dbReference type="ProteomicsDB" id="59777">
    <molecule id="Q13952-6"/>
</dbReference>
<dbReference type="Pumba" id="Q13952"/>
<dbReference type="Antibodypedia" id="18017">
    <property type="antibodies" value="255 antibodies from 29 providers"/>
</dbReference>
<dbReference type="DNASU" id="4802"/>
<dbReference type="Ensembl" id="ENST00000308733.9">
    <molecule id="Q13952-1"/>
    <property type="protein sequence ID" value="ENSP00000312617.5"/>
    <property type="gene ID" value="ENSG00000066136.21"/>
</dbReference>
<dbReference type="Ensembl" id="ENST00000372651.5">
    <molecule id="Q13952-2"/>
    <property type="protein sequence ID" value="ENSP00000361734.1"/>
    <property type="gene ID" value="ENSG00000066136.21"/>
</dbReference>
<dbReference type="Ensembl" id="ENST00000372652.5">
    <molecule id="Q13952-3"/>
    <property type="protein sequence ID" value="ENSP00000361736.1"/>
    <property type="gene ID" value="ENSG00000066136.21"/>
</dbReference>
<dbReference type="Ensembl" id="ENST00000372653.5">
    <molecule id="Q13952-6"/>
    <property type="protein sequence ID" value="ENSP00000361737.1"/>
    <property type="gene ID" value="ENSG00000066136.21"/>
</dbReference>
<dbReference type="Ensembl" id="ENST00000372654.5">
    <molecule id="Q13952-2"/>
    <property type="protein sequence ID" value="ENSP00000361738.1"/>
    <property type="gene ID" value="ENSG00000066136.21"/>
</dbReference>
<dbReference type="Ensembl" id="ENST00000425457.6">
    <molecule id="Q13952-5"/>
    <property type="protein sequence ID" value="ENSP00000396620.2"/>
    <property type="gene ID" value="ENSG00000066136.21"/>
</dbReference>
<dbReference type="Ensembl" id="ENST00000427410.6">
    <molecule id="Q13952-4"/>
    <property type="protein sequence ID" value="ENSP00000408315.2"/>
    <property type="gene ID" value="ENSG00000066136.21"/>
</dbReference>
<dbReference type="Ensembl" id="ENST00000440226.7">
    <molecule id="Q13952-2"/>
    <property type="protein sequence ID" value="ENSP00000414299.2"/>
    <property type="gene ID" value="ENSG00000066136.21"/>
</dbReference>
<dbReference type="Ensembl" id="ENST00000447388.8">
    <molecule id="Q13952-2"/>
    <property type="protein sequence ID" value="ENSP00000404427.3"/>
    <property type="gene ID" value="ENSG00000066136.21"/>
</dbReference>
<dbReference type="Ensembl" id="ENST00000456393.6">
    <molecule id="Q13952-7"/>
    <property type="protein sequence ID" value="ENSP00000408867.2"/>
    <property type="gene ID" value="ENSG00000066136.21"/>
</dbReference>
<dbReference type="GeneID" id="4802"/>
<dbReference type="KEGG" id="hsa:4802"/>
<dbReference type="MANE-Select" id="ENST00000447388.8">
    <molecule id="Q13952-2"/>
    <property type="protein sequence ID" value="ENSP00000404427.3"/>
    <property type="RefSeq nucleotide sequence ID" value="NM_014223.5"/>
    <property type="RefSeq protein sequence ID" value="NP_055038.2"/>
</dbReference>
<dbReference type="UCSC" id="uc001cfx.6">
    <molecule id="Q13952-1"/>
    <property type="organism name" value="human"/>
</dbReference>
<dbReference type="AGR" id="HGNC:7806"/>
<dbReference type="CTD" id="4802"/>
<dbReference type="DisGeNET" id="4802"/>
<dbReference type="GeneCards" id="NFYC"/>
<dbReference type="HGNC" id="HGNC:7806">
    <property type="gene designation" value="NFYC"/>
</dbReference>
<dbReference type="HPA" id="ENSG00000066136">
    <property type="expression patterns" value="Low tissue specificity"/>
</dbReference>
<dbReference type="MIM" id="605344">
    <property type="type" value="gene"/>
</dbReference>
<dbReference type="neXtProt" id="NX_Q13952"/>
<dbReference type="OpenTargets" id="ENSG00000066136"/>
<dbReference type="PharmGKB" id="PA31611"/>
<dbReference type="VEuPathDB" id="HostDB:ENSG00000066136"/>
<dbReference type="eggNOG" id="KOG1657">
    <property type="taxonomic scope" value="Eukaryota"/>
</dbReference>
<dbReference type="GeneTree" id="ENSGT00940000155689"/>
<dbReference type="HOGENOM" id="CLU_045277_2_1_1"/>
<dbReference type="InParanoid" id="Q13952"/>
<dbReference type="OMA" id="VCCAQPP"/>
<dbReference type="OrthoDB" id="1272441at2759"/>
<dbReference type="PAN-GO" id="Q13952">
    <property type="GO annotations" value="4 GO annotations based on evolutionary models"/>
</dbReference>
<dbReference type="PhylomeDB" id="Q13952"/>
<dbReference type="TreeFam" id="TF354207"/>
<dbReference type="PathwayCommons" id="Q13952"/>
<dbReference type="Reactome" id="R-HSA-1989781">
    <property type="pathway name" value="PPARA activates gene expression"/>
</dbReference>
<dbReference type="Reactome" id="R-HSA-2426168">
    <property type="pathway name" value="Activation of gene expression by SREBF (SREBP)"/>
</dbReference>
<dbReference type="Reactome" id="R-HSA-380994">
    <property type="pathway name" value="ATF4 activates genes in response to endoplasmic reticulum stress"/>
</dbReference>
<dbReference type="Reactome" id="R-HSA-381183">
    <property type="pathway name" value="ATF6 (ATF6-alpha) activates chaperone genes"/>
</dbReference>
<dbReference type="Reactome" id="R-HSA-9614657">
    <property type="pathway name" value="FOXO-mediated transcription of cell death genes"/>
</dbReference>
<dbReference type="SignaLink" id="Q13952"/>
<dbReference type="SIGNOR" id="Q13952"/>
<dbReference type="BioGRID-ORCS" id="4802">
    <property type="hits" value="676 hits in 1186 CRISPR screens"/>
</dbReference>
<dbReference type="ChiTaRS" id="NFYC">
    <property type="organism name" value="human"/>
</dbReference>
<dbReference type="EvolutionaryTrace" id="Q13952"/>
<dbReference type="GeneWiki" id="NFYC"/>
<dbReference type="GenomeRNAi" id="4802"/>
<dbReference type="Pharos" id="Q13952">
    <property type="development level" value="Tbio"/>
</dbReference>
<dbReference type="PRO" id="PR:Q13952"/>
<dbReference type="Proteomes" id="UP000005640">
    <property type="component" value="Chromosome 1"/>
</dbReference>
<dbReference type="RNAct" id="Q13952">
    <property type="molecule type" value="protein"/>
</dbReference>
<dbReference type="Bgee" id="ENSG00000066136">
    <property type="expression patterns" value="Expressed in buccal mucosa cell and 214 other cell types or tissues"/>
</dbReference>
<dbReference type="ExpressionAtlas" id="Q13952">
    <property type="expression patterns" value="baseline and differential"/>
</dbReference>
<dbReference type="GO" id="GO:0016602">
    <property type="term" value="C:CCAAT-binding factor complex"/>
    <property type="evidence" value="ECO:0000314"/>
    <property type="project" value="UniProtKB"/>
</dbReference>
<dbReference type="GO" id="GO:0000785">
    <property type="term" value="C:chromatin"/>
    <property type="evidence" value="ECO:0000247"/>
    <property type="project" value="NTNU_SB"/>
</dbReference>
<dbReference type="GO" id="GO:0005654">
    <property type="term" value="C:nucleoplasm"/>
    <property type="evidence" value="ECO:0000314"/>
    <property type="project" value="HPA"/>
</dbReference>
<dbReference type="GO" id="GO:0005634">
    <property type="term" value="C:nucleus"/>
    <property type="evidence" value="ECO:0000314"/>
    <property type="project" value="UniProtKB"/>
</dbReference>
<dbReference type="GO" id="GO:0032993">
    <property type="term" value="C:protein-DNA complex"/>
    <property type="evidence" value="ECO:0000314"/>
    <property type="project" value="ParkinsonsUK-UCL"/>
</dbReference>
<dbReference type="GO" id="GO:0090575">
    <property type="term" value="C:RNA polymerase II transcription regulator complex"/>
    <property type="evidence" value="ECO:0000314"/>
    <property type="project" value="NTNU_SB"/>
</dbReference>
<dbReference type="GO" id="GO:0003677">
    <property type="term" value="F:DNA binding"/>
    <property type="evidence" value="ECO:0000314"/>
    <property type="project" value="UniProtKB"/>
</dbReference>
<dbReference type="GO" id="GO:0001228">
    <property type="term" value="F:DNA-binding transcription activator activity, RNA polymerase II-specific"/>
    <property type="evidence" value="ECO:0000318"/>
    <property type="project" value="GO_Central"/>
</dbReference>
<dbReference type="GO" id="GO:0003700">
    <property type="term" value="F:DNA-binding transcription factor activity"/>
    <property type="evidence" value="ECO:0000304"/>
    <property type="project" value="ProtInc"/>
</dbReference>
<dbReference type="GO" id="GO:0000981">
    <property type="term" value="F:DNA-binding transcription factor activity, RNA polymerase II-specific"/>
    <property type="evidence" value="ECO:0000247"/>
    <property type="project" value="NTNU_SB"/>
</dbReference>
<dbReference type="GO" id="GO:0046982">
    <property type="term" value="F:protein heterodimerization activity"/>
    <property type="evidence" value="ECO:0007669"/>
    <property type="project" value="InterPro"/>
</dbReference>
<dbReference type="GO" id="GO:0000978">
    <property type="term" value="F:RNA polymerase II cis-regulatory region sequence-specific DNA binding"/>
    <property type="evidence" value="ECO:0007669"/>
    <property type="project" value="Ensembl"/>
</dbReference>
<dbReference type="GO" id="GO:0045944">
    <property type="term" value="P:positive regulation of transcription by RNA polymerase II"/>
    <property type="evidence" value="ECO:0000314"/>
    <property type="project" value="ComplexPortal"/>
</dbReference>
<dbReference type="GO" id="GO:0006457">
    <property type="term" value="P:protein folding"/>
    <property type="evidence" value="ECO:0000304"/>
    <property type="project" value="ProtInc"/>
</dbReference>
<dbReference type="GO" id="GO:0006355">
    <property type="term" value="P:regulation of DNA-templated transcription"/>
    <property type="evidence" value="ECO:0000314"/>
    <property type="project" value="UniProtKB"/>
</dbReference>
<dbReference type="GO" id="GO:0006357">
    <property type="term" value="P:regulation of transcription by RNA polymerase II"/>
    <property type="evidence" value="ECO:0000318"/>
    <property type="project" value="GO_Central"/>
</dbReference>
<dbReference type="CDD" id="cd22908">
    <property type="entry name" value="HFD_NFYC-like"/>
    <property type="match status" value="1"/>
</dbReference>
<dbReference type="FunFam" id="1.10.20.10:FF:000006">
    <property type="entry name" value="Nuclear transcription factor Y subunit gamma"/>
    <property type="match status" value="1"/>
</dbReference>
<dbReference type="Gene3D" id="1.10.20.10">
    <property type="entry name" value="Histone, subunit A"/>
    <property type="match status" value="1"/>
</dbReference>
<dbReference type="InterPro" id="IPR009072">
    <property type="entry name" value="Histone-fold"/>
</dbReference>
<dbReference type="InterPro" id="IPR007125">
    <property type="entry name" value="Histone_H2A/H2B/H3"/>
</dbReference>
<dbReference type="InterPro" id="IPR050568">
    <property type="entry name" value="Transcr_DNA_Rep_Reg"/>
</dbReference>
<dbReference type="PANTHER" id="PTHR10252">
    <property type="entry name" value="HISTONE-LIKE TRANSCRIPTION FACTOR CCAAT-RELATED"/>
    <property type="match status" value="1"/>
</dbReference>
<dbReference type="PANTHER" id="PTHR10252:SF8">
    <property type="entry name" value="NUCLEAR TRANSCRIPTION FACTOR Y SUBUNIT GAMMA"/>
    <property type="match status" value="1"/>
</dbReference>
<dbReference type="Pfam" id="PF00125">
    <property type="entry name" value="Histone"/>
    <property type="match status" value="1"/>
</dbReference>
<dbReference type="SUPFAM" id="SSF47113">
    <property type="entry name" value="Histone-fold"/>
    <property type="match status" value="1"/>
</dbReference>
<gene>
    <name type="primary">NFYC</name>
</gene>
<sequence>MSTEGGFGGTSSSDAQQSLQSFWPRVMEEIRNLTVKDFRVQELPLARIKKIMKLDEDVKMISAEAPVLFAKAAQIFITELTLRAWIHTEDNKRRTLQRNDIAMAITKFDQFDFLIDIVPRDELKPPKRQEEVRQSVTPAEPVQYYFTLAQQPTAVQVQGQQQGQQTTSSTTTIQPGQIIIAQPQQGQTTPVTMQVGEGQQVQIVQAQPQGQAQQAQSGTGQTMQVMQQIITNTGEIQQIPVQLNAGQLQYIRLAQPVSGTQVVQGQIQTLATNAQQGQRNASQGKPRRCLKETLQITQTEVQQGQQQFSQFTDGQRNSVQQARVSELTGEAEPREVKATGNSTPCTSSLPTTHPPSHRAGASCVCCSQPQQSSTSPPPSDALQWVVVEVSGTPNQLETHRELHAPLPGMTSLSPLHPSQQLYQIQQVTMPAGQDLAQPMFIQSANQPSDGQAPQVTGD</sequence>
<keyword id="KW-0002">3D-structure</keyword>
<keyword id="KW-0010">Activator</keyword>
<keyword id="KW-0025">Alternative splicing</keyword>
<keyword id="KW-0238">DNA-binding</keyword>
<keyword id="KW-0539">Nucleus</keyword>
<keyword id="KW-1267">Proteomics identification</keyword>
<keyword id="KW-1185">Reference proteome</keyword>
<keyword id="KW-0804">Transcription</keyword>
<keyword id="KW-0805">Transcription regulation</keyword>
<comment type="function">
    <text>Component of the sequence-specific heterotrimeric transcription factor (NF-Y) which specifically recognizes a 5'-CCAAT-3' box motif found in the promoters of its target genes. NF-Y can function as both an activator and a repressor, depending on its interacting cofactors.</text>
</comment>
<comment type="subunit">
    <text evidence="2 4">Heterotrimeric transcription factor composed of three components, NF-YA, NF-YB and NF-YC. NF-YB and NF-YC must interact and dimerize for NF-YA association and DNA binding.</text>
</comment>
<comment type="interaction">
    <interactant intactId="EBI-389755">
        <id>Q13952</id>
    </interactant>
    <interactant intactId="EBI-389739">
        <id>P23511</id>
        <label>NFYA</label>
    </interactant>
    <organismsDiffer>false</organismsDiffer>
    <experiments>9</experiments>
</comment>
<comment type="interaction">
    <interactant intactId="EBI-389755">
        <id>Q13952</id>
    </interactant>
    <interactant intactId="EBI-389728">
        <id>P25208</id>
        <label>NFYB</label>
    </interactant>
    <organismsDiffer>false</organismsDiffer>
    <experiments>9</experiments>
</comment>
<comment type="interaction">
    <interactant intactId="EBI-11956831">
        <id>Q13952-2</id>
    </interactant>
    <interactant intactId="EBI-7600130">
        <id>Q8IZF2</id>
        <label>ADGRF5</label>
    </interactant>
    <organismsDiffer>false</organismsDiffer>
    <experiments>3</experiments>
</comment>
<comment type="interaction">
    <interactant intactId="EBI-11956831">
        <id>Q13952-2</id>
    </interactant>
    <interactant intactId="EBI-10296818">
        <id>Q9BRG6</id>
        <label>APOL4</label>
    </interactant>
    <organismsDiffer>false</organismsDiffer>
    <experiments>3</experiments>
</comment>
<comment type="interaction">
    <interactant intactId="EBI-11956831">
        <id>Q13952-2</id>
    </interactant>
    <interactant intactId="EBI-6137689">
        <id>Q9BUT1</id>
        <label>BDH2</label>
    </interactant>
    <organismsDiffer>false</organismsDiffer>
    <experiments>3</experiments>
</comment>
<comment type="interaction">
    <interactant intactId="EBI-11956831">
        <id>Q13952-2</id>
    </interactant>
    <interactant intactId="EBI-742887">
        <id>Q8TAP6</id>
        <label>CEP76</label>
    </interactant>
    <organismsDiffer>false</organismsDiffer>
    <experiments>3</experiments>
</comment>
<comment type="interaction">
    <interactant intactId="EBI-11956831">
        <id>Q13952-2</id>
    </interactant>
    <interactant intactId="EBI-10265133">
        <id>Q8N365</id>
        <label>CIART</label>
    </interactant>
    <organismsDiffer>false</organismsDiffer>
    <experiments>3</experiments>
</comment>
<comment type="interaction">
    <interactant intactId="EBI-11956831">
        <id>Q13952-2</id>
    </interactant>
    <interactant intactId="EBI-748171">
        <id>O43186</id>
        <label>CRX</label>
    </interactant>
    <organismsDiffer>false</organismsDiffer>
    <experiments>3</experiments>
</comment>
<comment type="interaction">
    <interactant intactId="EBI-11956831">
        <id>Q13952-2</id>
    </interactant>
    <interactant intactId="EBI-12024320">
        <id>Q8TB03</id>
        <label>CXorf38</label>
    </interactant>
    <organismsDiffer>false</organismsDiffer>
    <experiments>3</experiments>
</comment>
<comment type="interaction">
    <interactant intactId="EBI-11956831">
        <id>Q13952-2</id>
    </interactant>
    <interactant intactId="EBI-750300">
        <id>Q01658</id>
        <label>DR1</label>
    </interactant>
    <organismsDiffer>false</organismsDiffer>
    <experiments>3</experiments>
</comment>
<comment type="interaction">
    <interactant intactId="EBI-11956831">
        <id>Q13952-2</id>
    </interactant>
    <interactant intactId="EBI-765526">
        <id>P32519</id>
        <label>ELF1</label>
    </interactant>
    <organismsDiffer>false</organismsDiffer>
    <experiments>3</experiments>
</comment>
<comment type="interaction">
    <interactant intactId="EBI-11956831">
        <id>Q13952-2</id>
    </interactant>
    <interactant intactId="EBI-11978259">
        <id>Q92567-2</id>
        <label>FAM168A</label>
    </interactant>
    <organismsDiffer>false</organismsDiffer>
    <experiments>3</experiments>
</comment>
<comment type="interaction">
    <interactant intactId="EBI-11956831">
        <id>Q13952-2</id>
    </interactant>
    <interactant intactId="EBI-10220102">
        <id>B7ZLH0</id>
        <label>FAM22F</label>
    </interactant>
    <organismsDiffer>false</organismsDiffer>
    <experiments>3</experiments>
</comment>
<comment type="interaction">
    <interactant intactId="EBI-11956831">
        <id>Q13952-2</id>
    </interactant>
    <interactant intactId="EBI-740220">
        <id>O14964</id>
        <label>HGS</label>
    </interactant>
    <organismsDiffer>false</organismsDiffer>
    <experiments>3</experiments>
</comment>
<comment type="interaction">
    <interactant intactId="EBI-11956831">
        <id>Q13952-2</id>
    </interactant>
    <interactant intactId="EBI-3957665">
        <id>Q96LI6</id>
        <label>HSFY2</label>
    </interactant>
    <organismsDiffer>false</organismsDiffer>
    <experiments>3</experiments>
</comment>
<comment type="interaction">
    <interactant intactId="EBI-11956831">
        <id>Q13952-2</id>
    </interactant>
    <interactant intactId="EBI-948266">
        <id>O14901</id>
        <label>KLF11</label>
    </interactant>
    <organismsDiffer>false</organismsDiffer>
    <experiments>3</experiments>
</comment>
<comment type="interaction">
    <interactant intactId="EBI-11956831">
        <id>Q13952-2</id>
    </interactant>
    <interactant intactId="EBI-2796400">
        <id>Q9UIH9</id>
        <label>KLF15</label>
    </interactant>
    <organismsDiffer>false</organismsDiffer>
    <experiments>3</experiments>
</comment>
<comment type="interaction">
    <interactant intactId="EBI-11956831">
        <id>Q13952-2</id>
    </interactant>
    <interactant intactId="EBI-9478422">
        <id>Q96G42</id>
        <label>KLHDC7B</label>
    </interactant>
    <organismsDiffer>false</organismsDiffer>
    <experiments>3</experiments>
</comment>
<comment type="interaction">
    <interactant intactId="EBI-11956831">
        <id>Q13952-2</id>
    </interactant>
    <interactant intactId="EBI-1389411">
        <id>Q6MZP7</id>
        <label>LIN54</label>
    </interactant>
    <organismsDiffer>false</organismsDiffer>
    <experiments>3</experiments>
</comment>
<comment type="interaction">
    <interactant intactId="EBI-11956831">
        <id>Q13952-2</id>
    </interactant>
    <interactant intactId="EBI-2798728">
        <id>P61968</id>
        <label>LMO4</label>
    </interactant>
    <organismsDiffer>false</organismsDiffer>
    <experiments>3</experiments>
</comment>
<comment type="interaction">
    <interactant intactId="EBI-11956831">
        <id>Q13952-2</id>
    </interactant>
    <interactant intactId="EBI-11061759">
        <id>P23511-2</id>
        <label>NFYA</label>
    </interactant>
    <organismsDiffer>false</organismsDiffer>
    <experiments>4</experiments>
</comment>
<comment type="interaction">
    <interactant intactId="EBI-11956831">
        <id>Q13952-2</id>
    </interactant>
    <interactant intactId="EBI-389728">
        <id>P25208</id>
        <label>NFYB</label>
    </interactant>
    <organismsDiffer>false</organismsDiffer>
    <experiments>6</experiments>
</comment>
<comment type="interaction">
    <interactant intactId="EBI-11956831">
        <id>Q13952-2</id>
    </interactant>
    <interactant intactId="EBI-10240813">
        <id>Q3KNR5</id>
        <label>PAX4</label>
    </interactant>
    <organismsDiffer>false</organismsDiffer>
    <experiments>3</experiments>
</comment>
<comment type="interaction">
    <interactant intactId="EBI-11956831">
        <id>Q13952-2</id>
    </interactant>
    <interactant intactId="EBI-296331">
        <id>Q02548</id>
        <label>PAX5</label>
    </interactant>
    <organismsDiffer>false</organismsDiffer>
    <experiments>3</experiments>
</comment>
<comment type="interaction">
    <interactant intactId="EBI-11956831">
        <id>Q13952-2</id>
    </interactant>
    <interactant intactId="EBI-747278">
        <id>P26367</id>
        <label>PAX6</label>
    </interactant>
    <organismsDiffer>false</organismsDiffer>
    <experiments>3</experiments>
</comment>
<comment type="interaction">
    <interactant intactId="EBI-11956831">
        <id>Q13952-2</id>
    </interactant>
    <interactant intactId="EBI-1389308">
        <id>Q7Z3K3</id>
        <label>POGZ</label>
    </interactant>
    <organismsDiffer>false</organismsDiffer>
    <experiments>3</experiments>
</comment>
<comment type="interaction">
    <interactant intactId="EBI-11956831">
        <id>Q13952-2</id>
    </interactant>
    <interactant intactId="EBI-18138148">
        <id>Q14863</id>
        <label>POU6F1</label>
    </interactant>
    <organismsDiffer>false</organismsDiffer>
    <experiments>3</experiments>
</comment>
<comment type="interaction">
    <interactant intactId="EBI-11956831">
        <id>Q13952-2</id>
    </interactant>
    <interactant intactId="EBI-12029004">
        <id>P78424</id>
        <label>POU6F2</label>
    </interactant>
    <organismsDiffer>false</organismsDiffer>
    <experiments>3</experiments>
</comment>
<comment type="interaction">
    <interactant intactId="EBI-11956831">
        <id>Q13952-2</id>
    </interactant>
    <interactant intactId="EBI-12754095">
        <id>P86480</id>
        <label>PRR20D</label>
    </interactant>
    <organismsDiffer>false</organismsDiffer>
    <experiments>3</experiments>
</comment>
<comment type="interaction">
    <interactant intactId="EBI-11956831">
        <id>Q13952-2</id>
    </interactant>
    <interactant intactId="EBI-706448">
        <id>P43351</id>
        <label>RAD52</label>
    </interactant>
    <organismsDiffer>false</organismsDiffer>
    <experiments>3</experiments>
</comment>
<comment type="interaction">
    <interactant intactId="EBI-11956831">
        <id>Q13952-2</id>
    </interactant>
    <interactant intactId="EBI-743154">
        <id>Q9UBE0</id>
        <label>SAE1</label>
    </interactant>
    <organismsDiffer>false</organismsDiffer>
    <experiments>3</experiments>
</comment>
<comment type="interaction">
    <interactant intactId="EBI-11956831">
        <id>Q13952-2</id>
    </interactant>
    <interactant intactId="EBI-12061577">
        <id>Q8IYB5-2</id>
        <label>SMAP1</label>
    </interactant>
    <organismsDiffer>false</organismsDiffer>
    <experiments>3</experiments>
</comment>
<comment type="interaction">
    <interactant intactId="EBI-11956831">
        <id>Q13952-2</id>
    </interactant>
    <interactant intactId="EBI-9088579">
        <id>Q02086-2</id>
        <label>SP2</label>
    </interactant>
    <organismsDiffer>false</organismsDiffer>
    <experiments>3</experiments>
</comment>
<comment type="interaction">
    <interactant intactId="EBI-11956831">
        <id>Q13952-2</id>
    </interactant>
    <interactant intactId="EBI-10198587">
        <id>Q02446</id>
        <label>SP4</label>
    </interactant>
    <organismsDiffer>false</organismsDiffer>
    <experiments>3</experiments>
</comment>
<comment type="interaction">
    <interactant intactId="EBI-11956831">
        <id>Q13952-2</id>
    </interactant>
    <interactant intactId="EBI-465059">
        <id>Q12772</id>
        <label>SREBF2</label>
    </interactant>
    <organismsDiffer>false</organismsDiffer>
    <experiments>3</experiments>
</comment>
<comment type="interaction">
    <interactant intactId="EBI-11956831">
        <id>Q13952-2</id>
    </interactant>
    <interactant intactId="EBI-3923644">
        <id>Q6ZVD7</id>
        <label>STOX1</label>
    </interactant>
    <organismsDiffer>false</organismsDiffer>
    <experiments>3</experiments>
</comment>
<comment type="interaction">
    <interactant intactId="EBI-11956831">
        <id>Q13952-2</id>
    </interactant>
    <interactant intactId="EBI-1993627">
        <id>O94888</id>
        <label>UBXN7</label>
    </interactant>
    <organismsDiffer>false</organismsDiffer>
    <experiments>3</experiments>
</comment>
<comment type="interaction">
    <interactant intactId="EBI-11956831">
        <id>Q13952-2</id>
    </interactant>
    <interactant intactId="EBI-12949277">
        <id>O95789-4</id>
        <label>ZMYM6</label>
    </interactant>
    <organismsDiffer>false</organismsDiffer>
    <experiments>3</experiments>
</comment>
<comment type="interaction">
    <interactant intactId="EBI-11956831">
        <id>Q13952-2</id>
    </interactant>
    <interactant intactId="EBI-12021938">
        <id>Q8NBB4-2</id>
        <label>ZSCAN1</label>
    </interactant>
    <organismsDiffer>false</organismsDiffer>
    <experiments>3</experiments>
</comment>
<comment type="subcellular location">
    <subcellularLocation>
        <location>Nucleus</location>
    </subcellularLocation>
</comment>
<comment type="alternative products">
    <event type="alternative splicing"/>
    <isoform>
        <id>Q13952-1</id>
        <name>3</name>
        <name>DS2.8</name>
        <sequence type="displayed"/>
    </isoform>
    <isoform>
        <id>Q13952-2</id>
        <name>1</name>
        <name>Gamma</name>
        <sequence type="described" ref="VSP_000851 VSP_000852"/>
    </isoform>
    <isoform>
        <id>Q13952-3</id>
        <name>2</name>
        <sequence type="described" ref="VSP_000851"/>
    </isoform>
    <isoform>
        <id>Q13952-4</id>
        <name>4</name>
        <sequence type="described" ref="VSP_043348 VSP_000851 VSP_000852"/>
    </isoform>
    <isoform>
        <id>Q13952-5</id>
        <name>5</name>
        <sequence type="described" ref="VSP_000852"/>
    </isoform>
    <isoform>
        <id>Q13952-6</id>
        <name>6</name>
        <sequence type="described" ref="VSP_043349 VSP_000851 VSP_000852"/>
    </isoform>
    <isoform>
        <id>Q13952-7</id>
        <name>7</name>
        <sequence type="described" ref="VSP_000851 VSP_046350 VSP_000852"/>
    </isoform>
</comment>
<comment type="similarity">
    <text evidence="13">Belongs to the NFYC/HAP5 subunit family.</text>
</comment>
<comment type="sequence caution" evidence="13">
    <conflict type="erroneous initiation">
        <sequence resource="EMBL-CDS" id="BAD92212"/>
    </conflict>
    <text>Extended N-terminus.</text>
</comment>
<accession>Q13952</accession>
<accession>B4DUS6</accession>
<accession>B4DW63</accession>
<accession>D3DPV9</accession>
<accession>F8VWM3</accession>
<accession>Q59GY4</accession>
<accession>Q5T6K8</accession>
<accession>Q5T6K9</accession>
<accession>Q5T6L1</accession>
<accession>Q5TZR6</accession>
<accession>Q92869</accession>
<accession>Q9HBX1</accession>
<accession>Q9NXB5</accession>
<accession>Q9UM67</accession>
<accession>Q9UML0</accession>
<accession>Q9UMT7</accession>
<feature type="chain" id="PRO_0000218246" description="Nuclear transcription factor Y subunit gamma">
    <location>
        <begin position="1"/>
        <end position="458"/>
    </location>
</feature>
<feature type="region of interest" description="Disordered" evidence="1">
    <location>
        <begin position="305"/>
        <end position="379"/>
    </location>
</feature>
<feature type="compositionally biased region" description="Low complexity" evidence="1">
    <location>
        <begin position="305"/>
        <end position="315"/>
    </location>
</feature>
<feature type="compositionally biased region" description="Polar residues" evidence="1">
    <location>
        <begin position="339"/>
        <end position="351"/>
    </location>
</feature>
<feature type="splice variant" id="VSP_043348" description="In isoform 4." evidence="6">
    <location>
        <begin position="60"/>
        <end position="97"/>
    </location>
</feature>
<feature type="splice variant" id="VSP_043349" description="In isoform 6." evidence="6">
    <location>
        <begin position="186"/>
        <end position="219"/>
    </location>
</feature>
<feature type="splice variant" id="VSP_000851" description="In isoform 1, isoform 2, isoform 4, isoform 6 and isoform 7." evidence="5 6 7 8 9 10 11 12">
    <location>
        <begin position="277"/>
        <end position="295"/>
    </location>
</feature>
<feature type="splice variant" id="VSP_046350" description="In isoform 7." evidence="12">
    <location>
        <position position="315"/>
    </location>
</feature>
<feature type="splice variant" id="VSP_000852" description="In isoform 1, isoform 4, isoform 5, isoform 6 and isoform 7." evidence="5 6 7 8 9 10 11 12">
    <location>
        <begin position="316"/>
        <end position="419"/>
    </location>
</feature>
<feature type="sequence variant" id="VAR_035702" description="In a breast cancer sample; somatic mutation." evidence="3">
    <original>Q</original>
    <variation>H</variation>
    <location>
        <position position="165"/>
    </location>
</feature>
<feature type="sequence conflict" description="In Ref. 3; CAA99055." evidence="13" ref="3">
    <original>M</original>
    <variation>I</variation>
    <location>
        <position position="52"/>
    </location>
</feature>
<feature type="sequence conflict" description="In Ref. 4; BAA14051." evidence="13" ref="4">
    <original>D</original>
    <variation>N</variation>
    <location>
        <position position="90"/>
    </location>
</feature>
<feature type="sequence conflict" description="In Ref. 1; AAC50816." evidence="13" ref="1">
    <original>V</original>
    <variation>L</variation>
    <location>
        <position position="155"/>
    </location>
</feature>
<feature type="sequence conflict" description="In Ref. 4; BAA14051." evidence="13" ref="4">
    <original>Q</original>
    <variation>H</variation>
    <location>
        <position position="158"/>
    </location>
</feature>
<feature type="sequence conflict" description="In Ref. 4; BAA14051." evidence="13" ref="4">
    <original>T</original>
    <variation>N</variation>
    <location>
        <position position="171"/>
    </location>
</feature>
<feature type="sequence conflict" description="In Ref. 1; AAC50816." evidence="13" ref="1">
    <original>P</original>
    <variation>A</variation>
    <location>
        <position position="175"/>
    </location>
</feature>
<feature type="sequence conflict" description="In Ref. 4; BAA14051." evidence="13" ref="4">
    <original>I</original>
    <variation>F</variation>
    <location>
        <position position="179"/>
    </location>
</feature>
<feature type="sequence conflict" description="In Ref. 4; BAA12818/BAA14051." evidence="13" ref="4">
    <original>G</original>
    <variation>S</variation>
    <location>
        <position position="198"/>
    </location>
</feature>
<feature type="sequence conflict" description="In Ref. 4; BAA12818." evidence="13" ref="4">
    <original>Q</original>
    <variation>K</variation>
    <location>
        <position position="202"/>
    </location>
</feature>
<feature type="sequence conflict" description="In Ref. 4; BAA14051." evidence="13" ref="4">
    <original>QS</original>
    <variation>HN</variation>
    <location>
        <begin position="216"/>
        <end position="217"/>
    </location>
</feature>
<feature type="sequence conflict" description="In Ref. 1; AAC50816." evidence="13" ref="1">
    <original>L</original>
    <variation>V</variation>
    <location>
        <position position="248"/>
    </location>
</feature>
<feature type="sequence conflict" description="In Ref. 1; AAC50816." evidence="13" ref="1">
    <original>A</original>
    <variation>V</variation>
    <location>
        <position position="271"/>
    </location>
</feature>
<feature type="sequence conflict" description="In Ref. 4; BAA14051." evidence="13" ref="4">
    <original>Q</original>
    <variation>K</variation>
    <location>
        <position position="451"/>
    </location>
</feature>
<feature type="helix" evidence="16">
    <location>
        <begin position="40"/>
        <end position="42"/>
    </location>
</feature>
<feature type="helix" evidence="16">
    <location>
        <begin position="45"/>
        <end position="53"/>
    </location>
</feature>
<feature type="strand" evidence="14">
    <location>
        <begin position="55"/>
        <end position="57"/>
    </location>
</feature>
<feature type="strand" evidence="15">
    <location>
        <begin position="59"/>
        <end position="61"/>
    </location>
</feature>
<feature type="helix" evidence="16">
    <location>
        <begin position="64"/>
        <end position="90"/>
    </location>
</feature>
<feature type="strand" evidence="16">
    <location>
        <begin position="94"/>
        <end position="96"/>
    </location>
</feature>
<feature type="helix" evidence="16">
    <location>
        <begin position="98"/>
        <end position="107"/>
    </location>
</feature>
<feature type="helix" evidence="16">
    <location>
        <begin position="109"/>
        <end position="114"/>
    </location>
</feature>
<feature type="turn" evidence="16">
    <location>
        <begin position="115"/>
        <end position="117"/>
    </location>
</feature>
<organism>
    <name type="scientific">Homo sapiens</name>
    <name type="common">Human</name>
    <dbReference type="NCBI Taxonomy" id="9606"/>
    <lineage>
        <taxon>Eukaryota</taxon>
        <taxon>Metazoa</taxon>
        <taxon>Chordata</taxon>
        <taxon>Craniata</taxon>
        <taxon>Vertebrata</taxon>
        <taxon>Euteleostomi</taxon>
        <taxon>Mammalia</taxon>
        <taxon>Eutheria</taxon>
        <taxon>Euarchontoglires</taxon>
        <taxon>Primates</taxon>
        <taxon>Haplorrhini</taxon>
        <taxon>Catarrhini</taxon>
        <taxon>Hominidae</taxon>
        <taxon>Homo</taxon>
    </lineage>
</organism>
<proteinExistence type="evidence at protein level"/>
<name>NFYC_HUMAN</name>
<evidence type="ECO:0000256" key="1">
    <source>
        <dbReference type="SAM" id="MobiDB-lite"/>
    </source>
</evidence>
<evidence type="ECO:0000269" key="2">
    <source>
    </source>
</evidence>
<evidence type="ECO:0000269" key="3">
    <source>
    </source>
</evidence>
<evidence type="ECO:0000269" key="4">
    <source>
    </source>
</evidence>
<evidence type="ECO:0000303" key="5">
    <source>
    </source>
</evidence>
<evidence type="ECO:0000303" key="6">
    <source>
    </source>
</evidence>
<evidence type="ECO:0000303" key="7">
    <source>
    </source>
</evidence>
<evidence type="ECO:0000303" key="8">
    <source>
    </source>
</evidence>
<evidence type="ECO:0000303" key="9">
    <source>
    </source>
</evidence>
<evidence type="ECO:0000303" key="10">
    <source>
    </source>
</evidence>
<evidence type="ECO:0000303" key="11">
    <source ref="7"/>
</evidence>
<evidence type="ECO:0000303" key="12">
    <source ref="8"/>
</evidence>
<evidence type="ECO:0000305" key="13"/>
<evidence type="ECO:0007829" key="14">
    <source>
        <dbReference type="PDB" id="6QMP"/>
    </source>
</evidence>
<evidence type="ECO:0007829" key="15">
    <source>
        <dbReference type="PDB" id="6QMQ"/>
    </source>
</evidence>
<evidence type="ECO:0007829" key="16">
    <source>
        <dbReference type="PDB" id="8QU4"/>
    </source>
</evidence>
<protein>
    <recommendedName>
        <fullName>Nuclear transcription factor Y subunit gamma</fullName>
    </recommendedName>
    <alternativeName>
        <fullName>CAAT box DNA-binding protein subunit C</fullName>
    </alternativeName>
    <alternativeName>
        <fullName>Nuclear transcription factor Y subunit C</fullName>
        <shortName>NF-YC</shortName>
    </alternativeName>
    <alternativeName>
        <fullName>Transactivator HSM-1/2</fullName>
    </alternativeName>
</protein>
<reference key="1">
    <citation type="journal article" date="1996" name="J. Biol. Chem.">
        <title>Subunit association and DNA binding activity of the heterotrimeric transcription factor NF-Y is regulated by cellular redox.</title>
        <authorList>
            <person name="Nakshatri H."/>
            <person name="Bhat-Nakshatri P."/>
            <person name="Currie R.A."/>
        </authorList>
    </citation>
    <scope>NUCLEOTIDE SEQUENCE [MRNA] (ISOFORM 1)</scope>
</reference>
<reference key="2">
    <citation type="journal article" date="1997" name="Gene">
        <title>Cloning and expression of human NF-YC.</title>
        <authorList>
            <person name="Bellorini M."/>
            <person name="Zemzoumi K."/>
            <person name="Farina A."/>
            <person name="Berthelsen J."/>
            <person name="Piaggio G."/>
            <person name="Mantovani R."/>
        </authorList>
    </citation>
    <scope>NUCLEOTIDE SEQUENCE [MRNA] (ISOFORM 1)</scope>
</reference>
<reference key="3">
    <citation type="journal article" date="1997" name="Gene">
        <title>Isolation and sequence analysis of the cDNA encoding subunit C of human CCAAT-binding transcription factor.</title>
        <authorList>
            <person name="Dmitrenko V.V."/>
            <person name="Garifulin O.M."/>
            <person name="Kavsan V.M."/>
        </authorList>
    </citation>
    <scope>NUCLEOTIDE SEQUENCE [MRNA] (ISOFORM 1)</scope>
    <source>
        <tissue>Brain</tissue>
    </source>
</reference>
<reference key="4">
    <citation type="journal article" date="1999" name="J. Biol. Chem.">
        <title>Cell cycle-dependent switch of up- and down-regulation of human hsp70 gene expression by interaction between c-Myc and CBF/NF-Y.</title>
        <authorList>
            <person name="Taira T."/>
            <person name="Sawai M."/>
            <person name="Ikeda M."/>
            <person name="Tamai K."/>
            <person name="Iguchi-Ariga S.M.M."/>
            <person name="Ariga H."/>
        </authorList>
    </citation>
    <scope>NUCLEOTIDE SEQUENCE [MRNA] (ISOFORM 1)</scope>
    <source>
        <tissue>Brain</tissue>
    </source>
</reference>
<reference key="5">
    <citation type="submission" date="1999-10" db="EMBL/GenBank/DDBJ databases">
        <title>Cloning of a new variant of NFY-C.</title>
        <authorList>
            <person name="Bringuier P.P."/>
            <person name="Schalken J.A."/>
            <person name="Yamasaki H."/>
            <person name="Giroldi L.A."/>
        </authorList>
    </citation>
    <scope>NUCLEOTIDE SEQUENCE [MRNA] (ISOFORM 3)</scope>
</reference>
<reference key="6">
    <citation type="journal article" date="2004" name="Nat. Genet.">
        <title>Complete sequencing and characterization of 21,243 full-length human cDNAs.</title>
        <authorList>
            <person name="Ota T."/>
            <person name="Suzuki Y."/>
            <person name="Nishikawa T."/>
            <person name="Otsuki T."/>
            <person name="Sugiyama T."/>
            <person name="Irie R."/>
            <person name="Wakamatsu A."/>
            <person name="Hayashi K."/>
            <person name="Sato H."/>
            <person name="Nagai K."/>
            <person name="Kimura K."/>
            <person name="Makita H."/>
            <person name="Sekine M."/>
            <person name="Obayashi M."/>
            <person name="Nishi T."/>
            <person name="Shibahara T."/>
            <person name="Tanaka T."/>
            <person name="Ishii S."/>
            <person name="Yamamoto J."/>
            <person name="Saito K."/>
            <person name="Kawai Y."/>
            <person name="Isono Y."/>
            <person name="Nakamura Y."/>
            <person name="Nagahari K."/>
            <person name="Murakami K."/>
            <person name="Yasuda T."/>
            <person name="Iwayanagi T."/>
            <person name="Wagatsuma M."/>
            <person name="Shiratori A."/>
            <person name="Sudo H."/>
            <person name="Hosoiri T."/>
            <person name="Kaku Y."/>
            <person name="Kodaira H."/>
            <person name="Kondo H."/>
            <person name="Sugawara M."/>
            <person name="Takahashi M."/>
            <person name="Kanda K."/>
            <person name="Yokoi T."/>
            <person name="Furuya T."/>
            <person name="Kikkawa E."/>
            <person name="Omura Y."/>
            <person name="Abe K."/>
            <person name="Kamihara K."/>
            <person name="Katsuta N."/>
            <person name="Sato K."/>
            <person name="Tanikawa M."/>
            <person name="Yamazaki M."/>
            <person name="Ninomiya K."/>
            <person name="Ishibashi T."/>
            <person name="Yamashita H."/>
            <person name="Murakawa K."/>
            <person name="Fujimori K."/>
            <person name="Tanai H."/>
            <person name="Kimata M."/>
            <person name="Watanabe M."/>
            <person name="Hiraoka S."/>
            <person name="Chiba Y."/>
            <person name="Ishida S."/>
            <person name="Ono Y."/>
            <person name="Takiguchi S."/>
            <person name="Watanabe S."/>
            <person name="Yosida M."/>
            <person name="Hotuta T."/>
            <person name="Kusano J."/>
            <person name="Kanehori K."/>
            <person name="Takahashi-Fujii A."/>
            <person name="Hara H."/>
            <person name="Tanase T.-O."/>
            <person name="Nomura Y."/>
            <person name="Togiya S."/>
            <person name="Komai F."/>
            <person name="Hara R."/>
            <person name="Takeuchi K."/>
            <person name="Arita M."/>
            <person name="Imose N."/>
            <person name="Musashino K."/>
            <person name="Yuuki H."/>
            <person name="Oshima A."/>
            <person name="Sasaki N."/>
            <person name="Aotsuka S."/>
            <person name="Yoshikawa Y."/>
            <person name="Matsunawa H."/>
            <person name="Ichihara T."/>
            <person name="Shiohata N."/>
            <person name="Sano S."/>
            <person name="Moriya S."/>
            <person name="Momiyama H."/>
            <person name="Satoh N."/>
            <person name="Takami S."/>
            <person name="Terashima Y."/>
            <person name="Suzuki O."/>
            <person name="Nakagawa S."/>
            <person name="Senoh A."/>
            <person name="Mizoguchi H."/>
            <person name="Goto Y."/>
            <person name="Shimizu F."/>
            <person name="Wakebe H."/>
            <person name="Hishigaki H."/>
            <person name="Watanabe T."/>
            <person name="Sugiyama A."/>
            <person name="Takemoto M."/>
            <person name="Kawakami B."/>
            <person name="Yamazaki M."/>
            <person name="Watanabe K."/>
            <person name="Kumagai A."/>
            <person name="Itakura S."/>
            <person name="Fukuzumi Y."/>
            <person name="Fujimori Y."/>
            <person name="Komiyama M."/>
            <person name="Tashiro H."/>
            <person name="Tanigami A."/>
            <person name="Fujiwara T."/>
            <person name="Ono T."/>
            <person name="Yamada K."/>
            <person name="Fujii Y."/>
            <person name="Ozaki K."/>
            <person name="Hirao M."/>
            <person name="Ohmori Y."/>
            <person name="Kawabata A."/>
            <person name="Hikiji T."/>
            <person name="Kobatake N."/>
            <person name="Inagaki H."/>
            <person name="Ikema Y."/>
            <person name="Okamoto S."/>
            <person name="Okitani R."/>
            <person name="Kawakami T."/>
            <person name="Noguchi S."/>
            <person name="Itoh T."/>
            <person name="Shigeta K."/>
            <person name="Senba T."/>
            <person name="Matsumura K."/>
            <person name="Nakajima Y."/>
            <person name="Mizuno T."/>
            <person name="Morinaga M."/>
            <person name="Sasaki M."/>
            <person name="Togashi T."/>
            <person name="Oyama M."/>
            <person name="Hata H."/>
            <person name="Watanabe M."/>
            <person name="Komatsu T."/>
            <person name="Mizushima-Sugano J."/>
            <person name="Satoh T."/>
            <person name="Shirai Y."/>
            <person name="Takahashi Y."/>
            <person name="Nakagawa K."/>
            <person name="Okumura K."/>
            <person name="Nagase T."/>
            <person name="Nomura N."/>
            <person name="Kikuchi H."/>
            <person name="Masuho Y."/>
            <person name="Yamashita R."/>
            <person name="Nakai K."/>
            <person name="Yada T."/>
            <person name="Nakamura Y."/>
            <person name="Ohara O."/>
            <person name="Isogai T."/>
            <person name="Sugano S."/>
        </authorList>
    </citation>
    <scope>NUCLEOTIDE SEQUENCE [LARGE SCALE MRNA] (ISOFORMS 2; 4; 5 AND 6)</scope>
    <source>
        <tissue>Synovium</tissue>
    </source>
</reference>
<reference key="7">
    <citation type="submission" date="2004-10" db="EMBL/GenBank/DDBJ databases">
        <title>Cloning of human full-length CDSs in BD Creator(TM) system donor vector.</title>
        <authorList>
            <person name="Kalnine N."/>
            <person name="Chen X."/>
            <person name="Rolfs A."/>
            <person name="Halleck A."/>
            <person name="Hines L."/>
            <person name="Eisenstein S."/>
            <person name="Koundinya M."/>
            <person name="Raphael J."/>
            <person name="Moreira D."/>
            <person name="Kelley T."/>
            <person name="LaBaer J."/>
            <person name="Lin Y."/>
            <person name="Phelan M."/>
            <person name="Farmer A."/>
        </authorList>
    </citation>
    <scope>NUCLEOTIDE SEQUENCE [LARGE SCALE MRNA] (ISOFORM 1)</scope>
</reference>
<reference key="8">
    <citation type="submission" date="2005-03" db="EMBL/GenBank/DDBJ databases">
        <title>Homo sapiens protein coding cDNA.</title>
        <authorList>
            <person name="Totoki Y."/>
            <person name="Toyoda A."/>
            <person name="Takeda T."/>
            <person name="Sakaki Y."/>
            <person name="Tanaka A."/>
            <person name="Yokoyama S."/>
            <person name="Ohara O."/>
            <person name="Nagase T."/>
            <person name="Kikuno R.F."/>
        </authorList>
    </citation>
    <scope>NUCLEOTIDE SEQUENCE [LARGE SCALE MRNA] (ISOFORM 7)</scope>
    <source>
        <tissue>Brain</tissue>
    </source>
</reference>
<reference key="9">
    <citation type="journal article" date="2006" name="Nature">
        <title>The DNA sequence and biological annotation of human chromosome 1.</title>
        <authorList>
            <person name="Gregory S.G."/>
            <person name="Barlow K.F."/>
            <person name="McLay K.E."/>
            <person name="Kaul R."/>
            <person name="Swarbreck D."/>
            <person name="Dunham A."/>
            <person name="Scott C.E."/>
            <person name="Howe K.L."/>
            <person name="Woodfine K."/>
            <person name="Spencer C.C.A."/>
            <person name="Jones M.C."/>
            <person name="Gillson C."/>
            <person name="Searle S."/>
            <person name="Zhou Y."/>
            <person name="Kokocinski F."/>
            <person name="McDonald L."/>
            <person name="Evans R."/>
            <person name="Phillips K."/>
            <person name="Atkinson A."/>
            <person name="Cooper R."/>
            <person name="Jones C."/>
            <person name="Hall R.E."/>
            <person name="Andrews T.D."/>
            <person name="Lloyd C."/>
            <person name="Ainscough R."/>
            <person name="Almeida J.P."/>
            <person name="Ambrose K.D."/>
            <person name="Anderson F."/>
            <person name="Andrew R.W."/>
            <person name="Ashwell R.I.S."/>
            <person name="Aubin K."/>
            <person name="Babbage A.K."/>
            <person name="Bagguley C.L."/>
            <person name="Bailey J."/>
            <person name="Beasley H."/>
            <person name="Bethel G."/>
            <person name="Bird C.P."/>
            <person name="Bray-Allen S."/>
            <person name="Brown J.Y."/>
            <person name="Brown A.J."/>
            <person name="Buckley D."/>
            <person name="Burton J."/>
            <person name="Bye J."/>
            <person name="Carder C."/>
            <person name="Chapman J.C."/>
            <person name="Clark S.Y."/>
            <person name="Clarke G."/>
            <person name="Clee C."/>
            <person name="Cobley V."/>
            <person name="Collier R.E."/>
            <person name="Corby N."/>
            <person name="Coville G.J."/>
            <person name="Davies J."/>
            <person name="Deadman R."/>
            <person name="Dunn M."/>
            <person name="Earthrowl M."/>
            <person name="Ellington A.G."/>
            <person name="Errington H."/>
            <person name="Frankish A."/>
            <person name="Frankland J."/>
            <person name="French L."/>
            <person name="Garner P."/>
            <person name="Garnett J."/>
            <person name="Gay L."/>
            <person name="Ghori M.R.J."/>
            <person name="Gibson R."/>
            <person name="Gilby L.M."/>
            <person name="Gillett W."/>
            <person name="Glithero R.J."/>
            <person name="Grafham D.V."/>
            <person name="Griffiths C."/>
            <person name="Griffiths-Jones S."/>
            <person name="Grocock R."/>
            <person name="Hammond S."/>
            <person name="Harrison E.S.I."/>
            <person name="Hart E."/>
            <person name="Haugen E."/>
            <person name="Heath P.D."/>
            <person name="Holmes S."/>
            <person name="Holt K."/>
            <person name="Howden P.J."/>
            <person name="Hunt A.R."/>
            <person name="Hunt S.E."/>
            <person name="Hunter G."/>
            <person name="Isherwood J."/>
            <person name="James R."/>
            <person name="Johnson C."/>
            <person name="Johnson D."/>
            <person name="Joy A."/>
            <person name="Kay M."/>
            <person name="Kershaw J.K."/>
            <person name="Kibukawa M."/>
            <person name="Kimberley A.M."/>
            <person name="King A."/>
            <person name="Knights A.J."/>
            <person name="Lad H."/>
            <person name="Laird G."/>
            <person name="Lawlor S."/>
            <person name="Leongamornlert D.A."/>
            <person name="Lloyd D.M."/>
            <person name="Loveland J."/>
            <person name="Lovell J."/>
            <person name="Lush M.J."/>
            <person name="Lyne R."/>
            <person name="Martin S."/>
            <person name="Mashreghi-Mohammadi M."/>
            <person name="Matthews L."/>
            <person name="Matthews N.S.W."/>
            <person name="McLaren S."/>
            <person name="Milne S."/>
            <person name="Mistry S."/>
            <person name="Moore M.J.F."/>
            <person name="Nickerson T."/>
            <person name="O'Dell C.N."/>
            <person name="Oliver K."/>
            <person name="Palmeiri A."/>
            <person name="Palmer S.A."/>
            <person name="Parker A."/>
            <person name="Patel D."/>
            <person name="Pearce A.V."/>
            <person name="Peck A.I."/>
            <person name="Pelan S."/>
            <person name="Phelps K."/>
            <person name="Phillimore B.J."/>
            <person name="Plumb R."/>
            <person name="Rajan J."/>
            <person name="Raymond C."/>
            <person name="Rouse G."/>
            <person name="Saenphimmachak C."/>
            <person name="Sehra H.K."/>
            <person name="Sheridan E."/>
            <person name="Shownkeen R."/>
            <person name="Sims S."/>
            <person name="Skuce C.D."/>
            <person name="Smith M."/>
            <person name="Steward C."/>
            <person name="Subramanian S."/>
            <person name="Sycamore N."/>
            <person name="Tracey A."/>
            <person name="Tromans A."/>
            <person name="Van Helmond Z."/>
            <person name="Wall M."/>
            <person name="Wallis J.M."/>
            <person name="White S."/>
            <person name="Whitehead S.L."/>
            <person name="Wilkinson J.E."/>
            <person name="Willey D.L."/>
            <person name="Williams H."/>
            <person name="Wilming L."/>
            <person name="Wray P.W."/>
            <person name="Wu Z."/>
            <person name="Coulson A."/>
            <person name="Vaudin M."/>
            <person name="Sulston J.E."/>
            <person name="Durbin R.M."/>
            <person name="Hubbard T."/>
            <person name="Wooster R."/>
            <person name="Dunham I."/>
            <person name="Carter N.P."/>
            <person name="McVean G."/>
            <person name="Ross M.T."/>
            <person name="Harrow J."/>
            <person name="Olson M.V."/>
            <person name="Beck S."/>
            <person name="Rogers J."/>
            <person name="Bentley D.R."/>
        </authorList>
    </citation>
    <scope>NUCLEOTIDE SEQUENCE [LARGE SCALE GENOMIC DNA]</scope>
</reference>
<reference key="10">
    <citation type="submission" date="2005-09" db="EMBL/GenBank/DDBJ databases">
        <authorList>
            <person name="Mural R.J."/>
            <person name="Istrail S."/>
            <person name="Sutton G.G."/>
            <person name="Florea L."/>
            <person name="Halpern A.L."/>
            <person name="Mobarry C.M."/>
            <person name="Lippert R."/>
            <person name="Walenz B."/>
            <person name="Shatkay H."/>
            <person name="Dew I."/>
            <person name="Miller J.R."/>
            <person name="Flanigan M.J."/>
            <person name="Edwards N.J."/>
            <person name="Bolanos R."/>
            <person name="Fasulo D."/>
            <person name="Halldorsson B.V."/>
            <person name="Hannenhalli S."/>
            <person name="Turner R."/>
            <person name="Yooseph S."/>
            <person name="Lu F."/>
            <person name="Nusskern D.R."/>
            <person name="Shue B.C."/>
            <person name="Zheng X.H."/>
            <person name="Zhong F."/>
            <person name="Delcher A.L."/>
            <person name="Huson D.H."/>
            <person name="Kravitz S.A."/>
            <person name="Mouchard L."/>
            <person name="Reinert K."/>
            <person name="Remington K.A."/>
            <person name="Clark A.G."/>
            <person name="Waterman M.S."/>
            <person name="Eichler E.E."/>
            <person name="Adams M.D."/>
            <person name="Hunkapiller M.W."/>
            <person name="Myers E.W."/>
            <person name="Venter J.C."/>
        </authorList>
    </citation>
    <scope>NUCLEOTIDE SEQUENCE [LARGE SCALE GENOMIC DNA]</scope>
</reference>
<reference key="11">
    <citation type="journal article" date="2004" name="Genome Res.">
        <title>The status, quality, and expansion of the NIH full-length cDNA project: the Mammalian Gene Collection (MGC).</title>
        <authorList>
            <consortium name="The MGC Project Team"/>
        </authorList>
    </citation>
    <scope>NUCLEOTIDE SEQUENCE [LARGE SCALE MRNA] (ISOFORM 1)</scope>
    <source>
        <tissue>Brain</tissue>
    </source>
</reference>
<reference key="12">
    <citation type="journal article" date="2011" name="BMC Syst. Biol.">
        <title>Initial characterization of the human central proteome.</title>
        <authorList>
            <person name="Burkard T.R."/>
            <person name="Planyavsky M."/>
            <person name="Kaupe I."/>
            <person name="Breitwieser F.P."/>
            <person name="Buerckstuemmer T."/>
            <person name="Bennett K.L."/>
            <person name="Superti-Furga G."/>
            <person name="Colinge J."/>
        </authorList>
    </citation>
    <scope>IDENTIFICATION BY MASS SPECTROMETRY [LARGE SCALE ANALYSIS]</scope>
</reference>
<reference key="13">
    <citation type="journal article" date="2003" name="J. Biol. Chem.">
        <title>The NF-YB/NF-YC structure gives insight into DNA binding and transcription regulation by CCAAT factor NF-Y.</title>
        <authorList>
            <person name="Romier C."/>
            <person name="Cocchiarella F."/>
            <person name="Mantovani R."/>
            <person name="Moras D."/>
        </authorList>
    </citation>
    <scope>X-RAY CRYSTALLOGRAPHY (1.67 ANGSTROMS) OF 27-120 IN COMPLEX WITH NF-YB</scope>
</reference>
<reference key="14">
    <citation type="journal article" date="2013" name="Cell">
        <title>Sequence-specific transcription factor NF-Y displays histone-like DNA binding and H2B-like ubiquitination.</title>
        <authorList>
            <person name="Nardini M."/>
            <person name="Gnesutta N."/>
            <person name="Donati G."/>
            <person name="Gatta R."/>
            <person name="Forni C."/>
            <person name="Fossati A."/>
            <person name="Vonrhein C."/>
            <person name="Moras D."/>
            <person name="Romier C."/>
            <person name="Bolognesi M."/>
            <person name="Mantovani R."/>
        </authorList>
    </citation>
    <scope>X-RAY CRYSTALLOGRAPHY (3.08 ANGSTROMS) OF 27-120 IN COMPLEX WITH NYFA; NYFB AND PROMOTER DNA</scope>
    <scope>SUBUNIT</scope>
</reference>
<reference key="15">
    <citation type="journal article" date="2006" name="Science">
        <title>The consensus coding sequences of human breast and colorectal cancers.</title>
        <authorList>
            <person name="Sjoeblom T."/>
            <person name="Jones S."/>
            <person name="Wood L.D."/>
            <person name="Parsons D.W."/>
            <person name="Lin J."/>
            <person name="Barber T.D."/>
            <person name="Mandelker D."/>
            <person name="Leary R.J."/>
            <person name="Ptak J."/>
            <person name="Silliman N."/>
            <person name="Szabo S."/>
            <person name="Buckhaults P."/>
            <person name="Farrell C."/>
            <person name="Meeh P."/>
            <person name="Markowitz S.D."/>
            <person name="Willis J."/>
            <person name="Dawson D."/>
            <person name="Willson J.K.V."/>
            <person name="Gazdar A.F."/>
            <person name="Hartigan J."/>
            <person name="Wu L."/>
            <person name="Liu C."/>
            <person name="Parmigiani G."/>
            <person name="Park B.H."/>
            <person name="Bachman K.E."/>
            <person name="Papadopoulos N."/>
            <person name="Vogelstein B."/>
            <person name="Kinzler K.W."/>
            <person name="Velculescu V.E."/>
        </authorList>
    </citation>
    <scope>VARIANT [LARGE SCALE ANALYSIS] HIS-165</scope>
</reference>